<dbReference type="EC" id="1.1.-.-"/>
<dbReference type="EMBL" id="BA000022">
    <property type="protein sequence ID" value="BAA10233.1"/>
    <property type="molecule type" value="Genomic_DNA"/>
</dbReference>
<dbReference type="PIR" id="S76381">
    <property type="entry name" value="S76381"/>
</dbReference>
<dbReference type="SMR" id="Q55702"/>
<dbReference type="FunCoup" id="Q55702">
    <property type="interactions" value="363"/>
</dbReference>
<dbReference type="IntAct" id="Q55702">
    <property type="interactions" value="2"/>
</dbReference>
<dbReference type="STRING" id="1148.gene:10499732"/>
<dbReference type="PaxDb" id="1148-1001605"/>
<dbReference type="EnsemblBacteria" id="BAA10233">
    <property type="protein sequence ID" value="BAA10233"/>
    <property type="gene ID" value="BAA10233"/>
</dbReference>
<dbReference type="KEGG" id="syn:slr0229"/>
<dbReference type="eggNOG" id="COG2084">
    <property type="taxonomic scope" value="Bacteria"/>
</dbReference>
<dbReference type="InParanoid" id="Q55702"/>
<dbReference type="PhylomeDB" id="Q55702"/>
<dbReference type="Proteomes" id="UP000001425">
    <property type="component" value="Chromosome"/>
</dbReference>
<dbReference type="GO" id="GO:0051287">
    <property type="term" value="F:NAD binding"/>
    <property type="evidence" value="ECO:0007669"/>
    <property type="project" value="InterPro"/>
</dbReference>
<dbReference type="GO" id="GO:0050661">
    <property type="term" value="F:NADP binding"/>
    <property type="evidence" value="ECO:0007669"/>
    <property type="project" value="InterPro"/>
</dbReference>
<dbReference type="GO" id="GO:0016491">
    <property type="term" value="F:oxidoreductase activity"/>
    <property type="evidence" value="ECO:0007669"/>
    <property type="project" value="UniProtKB-KW"/>
</dbReference>
<dbReference type="GO" id="GO:0016054">
    <property type="term" value="P:organic acid catabolic process"/>
    <property type="evidence" value="ECO:0007669"/>
    <property type="project" value="UniProtKB-ARBA"/>
</dbReference>
<dbReference type="Gene3D" id="1.10.1040.10">
    <property type="entry name" value="N-(1-d-carboxylethyl)-l-norvaline Dehydrogenase, domain 2"/>
    <property type="match status" value="1"/>
</dbReference>
<dbReference type="Gene3D" id="3.40.50.720">
    <property type="entry name" value="NAD(P)-binding Rossmann-like Domain"/>
    <property type="match status" value="1"/>
</dbReference>
<dbReference type="InterPro" id="IPR002204">
    <property type="entry name" value="3-OH-isobutyrate_DH-rel_CS"/>
</dbReference>
<dbReference type="InterPro" id="IPR008927">
    <property type="entry name" value="6-PGluconate_DH-like_C_sf"/>
</dbReference>
<dbReference type="InterPro" id="IPR013328">
    <property type="entry name" value="6PGD_dom2"/>
</dbReference>
<dbReference type="InterPro" id="IPR006115">
    <property type="entry name" value="6PGDH_NADP-bd"/>
</dbReference>
<dbReference type="InterPro" id="IPR029154">
    <property type="entry name" value="HIBADH-like_NADP-bd"/>
</dbReference>
<dbReference type="InterPro" id="IPR015815">
    <property type="entry name" value="HIBADH-related"/>
</dbReference>
<dbReference type="InterPro" id="IPR036291">
    <property type="entry name" value="NAD(P)-bd_dom_sf"/>
</dbReference>
<dbReference type="PANTHER" id="PTHR43060">
    <property type="entry name" value="3-HYDROXYISOBUTYRATE DEHYDROGENASE-LIKE 1, MITOCHONDRIAL-RELATED"/>
    <property type="match status" value="1"/>
</dbReference>
<dbReference type="PANTHER" id="PTHR43060:SF15">
    <property type="entry name" value="3-HYDROXYISOBUTYRATE DEHYDROGENASE-LIKE 1, MITOCHONDRIAL-RELATED"/>
    <property type="match status" value="1"/>
</dbReference>
<dbReference type="Pfam" id="PF14833">
    <property type="entry name" value="NAD_binding_11"/>
    <property type="match status" value="1"/>
</dbReference>
<dbReference type="Pfam" id="PF03446">
    <property type="entry name" value="NAD_binding_2"/>
    <property type="match status" value="1"/>
</dbReference>
<dbReference type="PIRSF" id="PIRSF000103">
    <property type="entry name" value="HIBADH"/>
    <property type="match status" value="1"/>
</dbReference>
<dbReference type="SUPFAM" id="SSF48179">
    <property type="entry name" value="6-phosphogluconate dehydrogenase C-terminal domain-like"/>
    <property type="match status" value="1"/>
</dbReference>
<dbReference type="SUPFAM" id="SSF51735">
    <property type="entry name" value="NAD(P)-binding Rossmann-fold domains"/>
    <property type="match status" value="1"/>
</dbReference>
<dbReference type="PROSITE" id="PS00895">
    <property type="entry name" value="3_HYDROXYISOBUT_DH"/>
    <property type="match status" value="1"/>
</dbReference>
<accession>Q55702</accession>
<reference key="1">
    <citation type="journal article" date="1995" name="DNA Res.">
        <title>Sequence analysis of the genome of the unicellular cyanobacterium Synechocystis sp. strain PCC6803. I. Sequence features in the 1 Mb region from map positions 64% to 92% of the genome.</title>
        <authorList>
            <person name="Kaneko T."/>
            <person name="Tanaka A."/>
            <person name="Sato S."/>
            <person name="Kotani H."/>
            <person name="Sazuka T."/>
            <person name="Miyajima N."/>
            <person name="Sugiura M."/>
            <person name="Tabata S."/>
        </authorList>
    </citation>
    <scope>NUCLEOTIDE SEQUENCE [LARGE SCALE GENOMIC DNA]</scope>
    <source>
        <strain>ATCC 27184 / PCC 6803 / N-1</strain>
    </source>
</reference>
<reference key="2">
    <citation type="journal article" date="1996" name="DNA Res.">
        <title>Sequence analysis of the genome of the unicellular cyanobacterium Synechocystis sp. strain PCC6803. II. Sequence determination of the entire genome and assignment of potential protein-coding regions.</title>
        <authorList>
            <person name="Kaneko T."/>
            <person name="Sato S."/>
            <person name="Kotani H."/>
            <person name="Tanaka A."/>
            <person name="Asamizu E."/>
            <person name="Nakamura Y."/>
            <person name="Miyajima N."/>
            <person name="Hirosawa M."/>
            <person name="Sugiura M."/>
            <person name="Sasamoto S."/>
            <person name="Kimura T."/>
            <person name="Hosouchi T."/>
            <person name="Matsuno A."/>
            <person name="Muraki A."/>
            <person name="Nakazaki N."/>
            <person name="Naruo K."/>
            <person name="Okumura S."/>
            <person name="Shimpo S."/>
            <person name="Takeuchi C."/>
            <person name="Wada T."/>
            <person name="Watanabe A."/>
            <person name="Yamada M."/>
            <person name="Yasuda M."/>
            <person name="Tabata S."/>
        </authorList>
    </citation>
    <scope>NUCLEOTIDE SEQUENCE [LARGE SCALE GENOMIC DNA]</scope>
    <source>
        <strain>ATCC 27184 / PCC 6803 / Kazusa</strain>
    </source>
</reference>
<evidence type="ECO:0000250" key="1"/>
<evidence type="ECO:0000305" key="2"/>
<feature type="chain" id="PRO_0000173070" description="Uncharacterized oxidoreductase slr0229">
    <location>
        <begin position="1"/>
        <end position="290"/>
    </location>
</feature>
<feature type="active site" evidence="1">
    <location>
        <position position="175"/>
    </location>
</feature>
<feature type="binding site" evidence="1">
    <location>
        <begin position="7"/>
        <end position="21"/>
    </location>
    <ligand>
        <name>NAD(+)</name>
        <dbReference type="ChEBI" id="CHEBI:57540"/>
    </ligand>
</feature>
<feature type="binding site" evidence="1">
    <location>
        <position position="100"/>
    </location>
    <ligand>
        <name>NAD(+)</name>
        <dbReference type="ChEBI" id="CHEBI:57540"/>
    </ligand>
</feature>
<feature type="binding site" evidence="1">
    <location>
        <position position="243"/>
    </location>
    <ligand>
        <name>NAD(+)</name>
        <dbReference type="ChEBI" id="CHEBI:57540"/>
    </ligand>
</feature>
<organism>
    <name type="scientific">Synechocystis sp. (strain ATCC 27184 / PCC 6803 / Kazusa)</name>
    <dbReference type="NCBI Taxonomy" id="1111708"/>
    <lineage>
        <taxon>Bacteria</taxon>
        <taxon>Bacillati</taxon>
        <taxon>Cyanobacteriota</taxon>
        <taxon>Cyanophyceae</taxon>
        <taxon>Synechococcales</taxon>
        <taxon>Merismopediaceae</taxon>
        <taxon>Synechocystis</taxon>
    </lineage>
</organism>
<keyword id="KW-0520">NAD</keyword>
<keyword id="KW-0560">Oxidoreductase</keyword>
<keyword id="KW-1185">Reference proteome</keyword>
<protein>
    <recommendedName>
        <fullName>Uncharacterized oxidoreductase slr0229</fullName>
        <ecNumber>1.1.-.-</ecNumber>
    </recommendedName>
</protein>
<comment type="similarity">
    <text evidence="2">Belongs to the HIBADH-related family.</text>
</comment>
<gene>
    <name type="ordered locus">slr0229</name>
</gene>
<proteinExistence type="inferred from homology"/>
<sequence length="290" mass="29930">MNVSKIAVFGLGVMGSPMAQNLVKNGYQTVGYNRTLERPSVQEAAKAGVKVVTSIAVAAANADIILTCVGDEKDVQQLILGSGGIAEYAKPQALIIDCSTIGKTAAYELATNLKLQGLRFLDAPVTGGDVGAINGTLTIMVGGDISDFEEALPVLKSIGEKIVHCGPSGSGQAVKLCNQVLCGIHAIAAAEAIQLSEQLGIAPELVIDTCGSGAAGSWALTNLAPKMSEADFAPGFMVKHLLKDLRLVREAAENGPLPGVTLAESLFTSVQLLGGEDQGSQAIIRAYREA</sequence>
<name>Y229_SYNY3</name>